<proteinExistence type="inferred from homology"/>
<comment type="function">
    <text evidence="1">Essential for the assembly of ubiquinol-cytochrome c reductase. It has a direct effect on the correct occurrence of the Rieske protein, core 4, core 5 and apocytochrome b (By similarity).</text>
</comment>
<comment type="subcellular location">
    <subcellularLocation>
        <location evidence="1">Mitochondrion inner membrane</location>
        <topology evidence="1">Single-pass membrane protein</topology>
    </subcellularLocation>
</comment>
<comment type="similarity">
    <text evidence="4">Belongs to the CBP4 family.</text>
</comment>
<comment type="sequence caution" evidence="4">
    <conflict type="erroneous initiation">
        <sequence resource="EMBL-CDS" id="EEU06051"/>
    </conflict>
</comment>
<evidence type="ECO:0000250" key="1"/>
<evidence type="ECO:0000255" key="2"/>
<evidence type="ECO:0000256" key="3">
    <source>
        <dbReference type="SAM" id="MobiDB-lite"/>
    </source>
</evidence>
<evidence type="ECO:0000305" key="4"/>
<sequence>MERPLWVRWLKVYAIGGAIIGSGFLLFKYTTPTDQQLISQLSPELRLQYEREKKLRQSEQQALMKIVKETSQSDDPIWKTGPLQSPWERNGDNVQSRDHFAKVRAEEVQKEELARIRNELSQLRSETEEKTKEIVQDKQVKSWWRFW</sequence>
<accession>C7GT24</accession>
<feature type="chain" id="PRO_0000392084" description="Assembly factor CBP4">
    <location>
        <begin position="1"/>
        <end position="147"/>
    </location>
</feature>
<feature type="transmembrane region" description="Helical" evidence="2">
    <location>
        <begin position="5"/>
        <end position="27"/>
    </location>
</feature>
<feature type="region of interest" description="Disordered" evidence="3">
    <location>
        <begin position="73"/>
        <end position="94"/>
    </location>
</feature>
<keyword id="KW-0143">Chaperone</keyword>
<keyword id="KW-0472">Membrane</keyword>
<keyword id="KW-0496">Mitochondrion</keyword>
<keyword id="KW-0999">Mitochondrion inner membrane</keyword>
<keyword id="KW-0812">Transmembrane</keyword>
<keyword id="KW-1133">Transmembrane helix</keyword>
<gene>
    <name type="primary">CBP4</name>
    <name type="ORF">C1Q_03544</name>
</gene>
<protein>
    <recommendedName>
        <fullName>Assembly factor CBP4</fullName>
    </recommendedName>
    <alternativeName>
        <fullName>Cytochrome b mRNA-processing protein 4</fullName>
    </alternativeName>
</protein>
<organism>
    <name type="scientific">Saccharomyces cerevisiae (strain JAY291)</name>
    <name type="common">Baker's yeast</name>
    <dbReference type="NCBI Taxonomy" id="574961"/>
    <lineage>
        <taxon>Eukaryota</taxon>
        <taxon>Fungi</taxon>
        <taxon>Dikarya</taxon>
        <taxon>Ascomycota</taxon>
        <taxon>Saccharomycotina</taxon>
        <taxon>Saccharomycetes</taxon>
        <taxon>Saccharomycetales</taxon>
        <taxon>Saccharomycetaceae</taxon>
        <taxon>Saccharomyces</taxon>
    </lineage>
</organism>
<name>CBP4_YEAS2</name>
<dbReference type="EMBL" id="ACFL01000226">
    <property type="protein sequence ID" value="EEU06051.1"/>
    <property type="status" value="ALT_INIT"/>
    <property type="molecule type" value="Genomic_DNA"/>
</dbReference>
<dbReference type="SMR" id="C7GT24"/>
<dbReference type="OrthoDB" id="7422at4893"/>
<dbReference type="Proteomes" id="UP000008073">
    <property type="component" value="Unassembled WGS sequence"/>
</dbReference>
<dbReference type="GO" id="GO:0005743">
    <property type="term" value="C:mitochondrial inner membrane"/>
    <property type="evidence" value="ECO:0007669"/>
    <property type="project" value="UniProtKB-SubCell"/>
</dbReference>
<dbReference type="GO" id="GO:0034551">
    <property type="term" value="P:mitochondrial respiratory chain complex III assembly"/>
    <property type="evidence" value="ECO:0007669"/>
    <property type="project" value="TreeGrafter"/>
</dbReference>
<dbReference type="InterPro" id="IPR012420">
    <property type="entry name" value="Cbp4"/>
</dbReference>
<dbReference type="PANTHER" id="PTHR28202">
    <property type="entry name" value="ASSEMBLY FACTOR CBP4"/>
    <property type="match status" value="1"/>
</dbReference>
<dbReference type="PANTHER" id="PTHR28202:SF1">
    <property type="entry name" value="ASSEMBLY FACTOR CBP4"/>
    <property type="match status" value="1"/>
</dbReference>
<dbReference type="Pfam" id="PF07960">
    <property type="entry name" value="CBP4"/>
    <property type="match status" value="1"/>
</dbReference>
<reference key="1">
    <citation type="journal article" date="2009" name="Genome Res.">
        <title>Genome structure of a Saccharomyces cerevisiae strain widely used in bioethanol production.</title>
        <authorList>
            <person name="Argueso J.L."/>
            <person name="Carazzolle M.F."/>
            <person name="Mieczkowski P.A."/>
            <person name="Duarte F.M."/>
            <person name="Netto O.V.C."/>
            <person name="Missawa S.K."/>
            <person name="Galzerani F."/>
            <person name="Costa G.G.L."/>
            <person name="Vidal R.O."/>
            <person name="Noronha M.F."/>
            <person name="Dominska M."/>
            <person name="Andrietta M.G.S."/>
            <person name="Andrietta S.R."/>
            <person name="Cunha A.F."/>
            <person name="Gomes L.H."/>
            <person name="Tavares F.C.A."/>
            <person name="Alcarde A.R."/>
            <person name="Dietrich F.S."/>
            <person name="McCusker J.H."/>
            <person name="Petes T.D."/>
            <person name="Pereira G.A.G."/>
        </authorList>
    </citation>
    <scope>NUCLEOTIDE SEQUENCE [LARGE SCALE GENOMIC DNA]</scope>
    <source>
        <strain>JAY291</strain>
    </source>
</reference>